<protein>
    <recommendedName>
        <fullName>Uncharacterized protein ZK1307.2</fullName>
    </recommendedName>
</protein>
<organism>
    <name type="scientific">Caenorhabditis elegans</name>
    <dbReference type="NCBI Taxonomy" id="6239"/>
    <lineage>
        <taxon>Eukaryota</taxon>
        <taxon>Metazoa</taxon>
        <taxon>Ecdysozoa</taxon>
        <taxon>Nematoda</taxon>
        <taxon>Chromadorea</taxon>
        <taxon>Rhabditida</taxon>
        <taxon>Rhabditina</taxon>
        <taxon>Rhabditomorpha</taxon>
        <taxon>Rhabditoidea</taxon>
        <taxon>Rhabditidae</taxon>
        <taxon>Peloderinae</taxon>
        <taxon>Caenorhabditis</taxon>
    </lineage>
</organism>
<proteinExistence type="predicted"/>
<sequence>MKKITLLSGILFLIGYSDAEVFESQNVRVKRNDFTNNYGYGPFGIGPTNGGFDSYGFYRDKFYNSGLPPLYSFASYRNYYHEISFHKNKYGQPAPTDFETLQQERYGPYYDGVWGYADHSKNWFGKR</sequence>
<name>YS12_CAEEL</name>
<feature type="chain" id="PRO_0000065570" description="Uncharacterized protein ZK1307.2">
    <location>
        <begin position="1"/>
        <end position="127"/>
    </location>
</feature>
<gene>
    <name type="ORF">ZK1307.2</name>
</gene>
<keyword id="KW-1185">Reference proteome</keyword>
<dbReference type="EMBL" id="Z47358">
    <property type="protein sequence ID" value="CAA87430.1"/>
    <property type="molecule type" value="Genomic_DNA"/>
</dbReference>
<dbReference type="PIR" id="T27727">
    <property type="entry name" value="T27727"/>
</dbReference>
<dbReference type="RefSeq" id="NP_496080.1">
    <property type="nucleotide sequence ID" value="NM_063679.7"/>
</dbReference>
<dbReference type="SMR" id="Q09360"/>
<dbReference type="BioGRID" id="56089">
    <property type="interactions" value="1"/>
</dbReference>
<dbReference type="DIP" id="DIP-24475N"/>
<dbReference type="FunCoup" id="Q09360">
    <property type="interactions" value="394"/>
</dbReference>
<dbReference type="PaxDb" id="6239-ZK1307.2"/>
<dbReference type="EnsemblMetazoa" id="ZK1307.2.1">
    <property type="protein sequence ID" value="ZK1307.2.1"/>
    <property type="gene ID" value="WBGene00014245"/>
</dbReference>
<dbReference type="GeneID" id="191559"/>
<dbReference type="KEGG" id="cel:CELE_ZK1307.2"/>
<dbReference type="UCSC" id="ZK1307.2">
    <property type="organism name" value="c. elegans"/>
</dbReference>
<dbReference type="AGR" id="WB:WBGene00014245"/>
<dbReference type="CTD" id="191559"/>
<dbReference type="WormBase" id="ZK1307.2">
    <property type="protein sequence ID" value="CE01691"/>
    <property type="gene ID" value="WBGene00014245"/>
</dbReference>
<dbReference type="eggNOG" id="ENOG502THVN">
    <property type="taxonomic scope" value="Eukaryota"/>
</dbReference>
<dbReference type="HOGENOM" id="CLU_161571_0_0_1"/>
<dbReference type="InParanoid" id="Q09360"/>
<dbReference type="OMA" id="NGVWGYV"/>
<dbReference type="OrthoDB" id="5835795at2759"/>
<dbReference type="PRO" id="PR:Q09360"/>
<dbReference type="Proteomes" id="UP000001940">
    <property type="component" value="Chromosome II"/>
</dbReference>
<dbReference type="Bgee" id="WBGene00014245">
    <property type="expression patterns" value="Expressed in larva and 2 other cell types or tissues"/>
</dbReference>
<accession>Q09360</accession>
<reference key="1">
    <citation type="journal article" date="1998" name="Science">
        <title>Genome sequence of the nematode C. elegans: a platform for investigating biology.</title>
        <authorList>
            <consortium name="The C. elegans sequencing consortium"/>
        </authorList>
    </citation>
    <scope>NUCLEOTIDE SEQUENCE [LARGE SCALE GENOMIC DNA]</scope>
    <source>
        <strain>Bristol N2</strain>
    </source>
</reference>